<name>SYH_CHLPD</name>
<accession>A1BDE6</accession>
<evidence type="ECO:0000255" key="1">
    <source>
        <dbReference type="HAMAP-Rule" id="MF_00127"/>
    </source>
</evidence>
<protein>
    <recommendedName>
        <fullName evidence="1">Histidine--tRNA ligase</fullName>
        <ecNumber evidence="1">6.1.1.21</ecNumber>
    </recommendedName>
    <alternativeName>
        <fullName evidence="1">Histidyl-tRNA synthetase</fullName>
        <shortName evidence="1">HisRS</shortName>
    </alternativeName>
</protein>
<gene>
    <name evidence="1" type="primary">hisS</name>
    <name type="ordered locus">Cpha266_0364</name>
</gene>
<dbReference type="EC" id="6.1.1.21" evidence="1"/>
<dbReference type="EMBL" id="CP000492">
    <property type="protein sequence ID" value="ABL64423.1"/>
    <property type="molecule type" value="Genomic_DNA"/>
</dbReference>
<dbReference type="RefSeq" id="WP_011744256.1">
    <property type="nucleotide sequence ID" value="NC_008639.1"/>
</dbReference>
<dbReference type="SMR" id="A1BDE6"/>
<dbReference type="STRING" id="290317.Cpha266_0364"/>
<dbReference type="KEGG" id="cph:Cpha266_0364"/>
<dbReference type="eggNOG" id="COG0124">
    <property type="taxonomic scope" value="Bacteria"/>
</dbReference>
<dbReference type="HOGENOM" id="CLU_025113_1_1_10"/>
<dbReference type="OrthoDB" id="9800814at2"/>
<dbReference type="Proteomes" id="UP000008701">
    <property type="component" value="Chromosome"/>
</dbReference>
<dbReference type="GO" id="GO:0005737">
    <property type="term" value="C:cytoplasm"/>
    <property type="evidence" value="ECO:0007669"/>
    <property type="project" value="UniProtKB-SubCell"/>
</dbReference>
<dbReference type="GO" id="GO:0005524">
    <property type="term" value="F:ATP binding"/>
    <property type="evidence" value="ECO:0007669"/>
    <property type="project" value="UniProtKB-UniRule"/>
</dbReference>
<dbReference type="GO" id="GO:0004821">
    <property type="term" value="F:histidine-tRNA ligase activity"/>
    <property type="evidence" value="ECO:0007669"/>
    <property type="project" value="UniProtKB-UniRule"/>
</dbReference>
<dbReference type="GO" id="GO:0006427">
    <property type="term" value="P:histidyl-tRNA aminoacylation"/>
    <property type="evidence" value="ECO:0007669"/>
    <property type="project" value="UniProtKB-UniRule"/>
</dbReference>
<dbReference type="CDD" id="cd00773">
    <property type="entry name" value="HisRS-like_core"/>
    <property type="match status" value="1"/>
</dbReference>
<dbReference type="CDD" id="cd00859">
    <property type="entry name" value="HisRS_anticodon"/>
    <property type="match status" value="1"/>
</dbReference>
<dbReference type="Gene3D" id="3.40.50.800">
    <property type="entry name" value="Anticodon-binding domain"/>
    <property type="match status" value="1"/>
</dbReference>
<dbReference type="Gene3D" id="3.30.930.10">
    <property type="entry name" value="Bira Bifunctional Protein, Domain 2"/>
    <property type="match status" value="1"/>
</dbReference>
<dbReference type="HAMAP" id="MF_00127">
    <property type="entry name" value="His_tRNA_synth"/>
    <property type="match status" value="1"/>
</dbReference>
<dbReference type="InterPro" id="IPR006195">
    <property type="entry name" value="aa-tRNA-synth_II"/>
</dbReference>
<dbReference type="InterPro" id="IPR045864">
    <property type="entry name" value="aa-tRNA-synth_II/BPL/LPL"/>
</dbReference>
<dbReference type="InterPro" id="IPR004154">
    <property type="entry name" value="Anticodon-bd"/>
</dbReference>
<dbReference type="InterPro" id="IPR036621">
    <property type="entry name" value="Anticodon-bd_dom_sf"/>
</dbReference>
<dbReference type="InterPro" id="IPR015807">
    <property type="entry name" value="His-tRNA-ligase"/>
</dbReference>
<dbReference type="InterPro" id="IPR041715">
    <property type="entry name" value="HisRS-like_core"/>
</dbReference>
<dbReference type="InterPro" id="IPR004516">
    <property type="entry name" value="HisRS/HisZ"/>
</dbReference>
<dbReference type="InterPro" id="IPR033656">
    <property type="entry name" value="HisRS_anticodon"/>
</dbReference>
<dbReference type="NCBIfam" id="TIGR00442">
    <property type="entry name" value="hisS"/>
    <property type="match status" value="1"/>
</dbReference>
<dbReference type="PANTHER" id="PTHR43707:SF1">
    <property type="entry name" value="HISTIDINE--TRNA LIGASE, MITOCHONDRIAL-RELATED"/>
    <property type="match status" value="1"/>
</dbReference>
<dbReference type="PANTHER" id="PTHR43707">
    <property type="entry name" value="HISTIDYL-TRNA SYNTHETASE"/>
    <property type="match status" value="1"/>
</dbReference>
<dbReference type="Pfam" id="PF03129">
    <property type="entry name" value="HGTP_anticodon"/>
    <property type="match status" value="1"/>
</dbReference>
<dbReference type="Pfam" id="PF13393">
    <property type="entry name" value="tRNA-synt_His"/>
    <property type="match status" value="1"/>
</dbReference>
<dbReference type="PIRSF" id="PIRSF001549">
    <property type="entry name" value="His-tRNA_synth"/>
    <property type="match status" value="1"/>
</dbReference>
<dbReference type="SUPFAM" id="SSF52954">
    <property type="entry name" value="Class II aaRS ABD-related"/>
    <property type="match status" value="1"/>
</dbReference>
<dbReference type="SUPFAM" id="SSF55681">
    <property type="entry name" value="Class II aaRS and biotin synthetases"/>
    <property type="match status" value="1"/>
</dbReference>
<dbReference type="PROSITE" id="PS50862">
    <property type="entry name" value="AA_TRNA_LIGASE_II"/>
    <property type="match status" value="1"/>
</dbReference>
<proteinExistence type="inferred from homology"/>
<comment type="catalytic activity">
    <reaction evidence="1">
        <text>tRNA(His) + L-histidine + ATP = L-histidyl-tRNA(His) + AMP + diphosphate + H(+)</text>
        <dbReference type="Rhea" id="RHEA:17313"/>
        <dbReference type="Rhea" id="RHEA-COMP:9665"/>
        <dbReference type="Rhea" id="RHEA-COMP:9689"/>
        <dbReference type="ChEBI" id="CHEBI:15378"/>
        <dbReference type="ChEBI" id="CHEBI:30616"/>
        <dbReference type="ChEBI" id="CHEBI:33019"/>
        <dbReference type="ChEBI" id="CHEBI:57595"/>
        <dbReference type="ChEBI" id="CHEBI:78442"/>
        <dbReference type="ChEBI" id="CHEBI:78527"/>
        <dbReference type="ChEBI" id="CHEBI:456215"/>
        <dbReference type="EC" id="6.1.1.21"/>
    </reaction>
</comment>
<comment type="subunit">
    <text evidence="1">Homodimer.</text>
</comment>
<comment type="subcellular location">
    <subcellularLocation>
        <location evidence="1">Cytoplasm</location>
    </subcellularLocation>
</comment>
<comment type="similarity">
    <text evidence="1">Belongs to the class-II aminoacyl-tRNA synthetase family.</text>
</comment>
<reference key="1">
    <citation type="submission" date="2006-12" db="EMBL/GenBank/DDBJ databases">
        <title>Complete sequence of Chlorobium phaeobacteroides DSM 266.</title>
        <authorList>
            <consortium name="US DOE Joint Genome Institute"/>
            <person name="Copeland A."/>
            <person name="Lucas S."/>
            <person name="Lapidus A."/>
            <person name="Barry K."/>
            <person name="Detter J.C."/>
            <person name="Glavina del Rio T."/>
            <person name="Hammon N."/>
            <person name="Israni S."/>
            <person name="Pitluck S."/>
            <person name="Goltsman E."/>
            <person name="Schmutz J."/>
            <person name="Larimer F."/>
            <person name="Land M."/>
            <person name="Hauser L."/>
            <person name="Mikhailova N."/>
            <person name="Li T."/>
            <person name="Overmann J."/>
            <person name="Bryant D.A."/>
            <person name="Richardson P."/>
        </authorList>
    </citation>
    <scope>NUCLEOTIDE SEQUENCE [LARGE SCALE GENOMIC DNA]</scope>
    <source>
        <strain>DSM 266 / SMG 266 / 2430</strain>
    </source>
</reference>
<organism>
    <name type="scientific">Chlorobium phaeobacteroides (strain DSM 266 / SMG 266 / 2430)</name>
    <dbReference type="NCBI Taxonomy" id="290317"/>
    <lineage>
        <taxon>Bacteria</taxon>
        <taxon>Pseudomonadati</taxon>
        <taxon>Chlorobiota</taxon>
        <taxon>Chlorobiia</taxon>
        <taxon>Chlorobiales</taxon>
        <taxon>Chlorobiaceae</taxon>
        <taxon>Chlorobium/Pelodictyon group</taxon>
        <taxon>Chlorobium</taxon>
    </lineage>
</organism>
<feature type="chain" id="PRO_1000057825" description="Histidine--tRNA ligase">
    <location>
        <begin position="1"/>
        <end position="429"/>
    </location>
</feature>
<keyword id="KW-0030">Aminoacyl-tRNA synthetase</keyword>
<keyword id="KW-0067">ATP-binding</keyword>
<keyword id="KW-0963">Cytoplasm</keyword>
<keyword id="KW-0436">Ligase</keyword>
<keyword id="KW-0547">Nucleotide-binding</keyword>
<keyword id="KW-0648">Protein biosynthesis</keyword>
<keyword id="KW-1185">Reference proteome</keyword>
<sequence>MSQYQVVKGARDIFPDEIVRWHYVEDVVHRLASLYGYSEIRTPVFEYTELFQRSIGTTTDIVGKEMFSFLPDPQGRSITLRPEMTAGVMRAVLQKNLLSTAPIHKLFYLSELFRKERPQAGRQRQFSQFGAELLGVSSPAAVAEVITFMMQVFETLGIRGLKLRINTLGDSSDRARYREILRAYLAPFYDRLDLASRERFEKNPLRILDSKNPDMQEIIEGAPTLHDSLSHEALEDFEKVRFYLDSRSIAYDIDYRLVRGLDYYCHTAFEVTSPELGAQDAIGGGGRYDGLAKELGSSGDVPASGFAAGMERVLITMEKQGLFAALRPSGPKVYVVAQQHALLDHALQVAYRLRREGISTEVDLAGRSMKAQMRDANRMRACFALFIGEDEVVSGSYALKNLVTADQTAQSIETIIEMLNQYSGAEQGS</sequence>